<gene>
    <name evidence="1" type="primary">rbcL</name>
</gene>
<proteinExistence type="inferred from homology"/>
<organism>
    <name type="scientific">Micranthes integrifolia</name>
    <name type="common">Wholeleaf saxifrage</name>
    <name type="synonym">Saxifraga integrifolia</name>
    <dbReference type="NCBI Taxonomy" id="3799"/>
    <lineage>
        <taxon>Eukaryota</taxon>
        <taxon>Viridiplantae</taxon>
        <taxon>Streptophyta</taxon>
        <taxon>Embryophyta</taxon>
        <taxon>Tracheophyta</taxon>
        <taxon>Spermatophyta</taxon>
        <taxon>Magnoliopsida</taxon>
        <taxon>eudicotyledons</taxon>
        <taxon>Gunneridae</taxon>
        <taxon>Pentapetalae</taxon>
        <taxon>Saxifragales</taxon>
        <taxon>Saxifragaceae</taxon>
        <taxon>Micrantheae</taxon>
        <taxon>Micranthes</taxon>
    </lineage>
</organism>
<feature type="chain" id="PRO_0000062588" description="Ribulose bisphosphate carboxylase large chain">
    <location>
        <begin position="1" status="less than"/>
        <end position="459" status="greater than"/>
    </location>
</feature>
<feature type="active site" description="Proton acceptor" evidence="1">
    <location>
        <position position="165"/>
    </location>
</feature>
<feature type="active site" description="Proton acceptor" evidence="1">
    <location>
        <position position="284"/>
    </location>
</feature>
<feature type="binding site" description="in homodimeric partner" evidence="1">
    <location>
        <position position="113"/>
    </location>
    <ligand>
        <name>substrate</name>
    </ligand>
</feature>
<feature type="binding site" evidence="1">
    <location>
        <position position="163"/>
    </location>
    <ligand>
        <name>substrate</name>
    </ligand>
</feature>
<feature type="binding site" evidence="1">
    <location>
        <position position="167"/>
    </location>
    <ligand>
        <name>substrate</name>
    </ligand>
</feature>
<feature type="binding site" description="via carbamate group" evidence="1">
    <location>
        <position position="191"/>
    </location>
    <ligand>
        <name>Mg(2+)</name>
        <dbReference type="ChEBI" id="CHEBI:18420"/>
    </ligand>
</feature>
<feature type="binding site" evidence="1">
    <location>
        <position position="193"/>
    </location>
    <ligand>
        <name>Mg(2+)</name>
        <dbReference type="ChEBI" id="CHEBI:18420"/>
    </ligand>
</feature>
<feature type="binding site" evidence="1">
    <location>
        <position position="194"/>
    </location>
    <ligand>
        <name>Mg(2+)</name>
        <dbReference type="ChEBI" id="CHEBI:18420"/>
    </ligand>
</feature>
<feature type="binding site" evidence="1">
    <location>
        <position position="285"/>
    </location>
    <ligand>
        <name>substrate</name>
    </ligand>
</feature>
<feature type="binding site" evidence="1">
    <location>
        <position position="317"/>
    </location>
    <ligand>
        <name>substrate</name>
    </ligand>
</feature>
<feature type="binding site" evidence="1">
    <location>
        <position position="369"/>
    </location>
    <ligand>
        <name>substrate</name>
    </ligand>
</feature>
<feature type="site" description="Transition state stabilizer" evidence="1">
    <location>
        <position position="324"/>
    </location>
</feature>
<feature type="modified residue" description="N6,N6,N6-trimethyllysine" evidence="1">
    <location>
        <position position="4"/>
    </location>
</feature>
<feature type="modified residue" description="N6-carboxylysine" evidence="1">
    <location>
        <position position="191"/>
    </location>
</feature>
<feature type="disulfide bond" description="Interchain; in linked form" evidence="1">
    <location>
        <position position="237"/>
    </location>
</feature>
<feature type="non-terminal residue">
    <location>
        <position position="1"/>
    </location>
</feature>
<feature type="non-terminal residue">
    <location>
        <position position="459"/>
    </location>
</feature>
<sequence>VGFKAGVKDYKLTYYTPDYETKDTDILAAFRVTPQPGVPPEEAGAVVAAESSTGTWTTVWTDGLTNLDRYKGRCYHIEPVAGEENQFIAYVAYPLDLFEEGSVTNMFTSIVGNVFGFKALRALRLEDLRIPVAYVKTFQGPPHGIQVERDKLNKYGRPLLGCTIKPKLGLSAKNYGRAVYECLRGGLDFTKDDENVNSQPFMRWRDRFLFCAEALYKAQAETGEIKGHYLNATAGTCEEMIKRAVFARELGVPIVMHDYLTGGFTANTSLAHYCRDNGLLLHIHRAMHAVIDRQKNHGIHFRVLAKALRMSGGDHIHSGTVVGKLEGEREITLGFVDLLRDDFIEKDRSRGIYFTQDWVSLPGVLPVASGGIHVWHMPALTEIFGDDSVLQFGGGTLGHPWGNAPGAVANRVALEACVQARNEGRDLAREGNEIIREACKWSPELAAACEVWKEIKFEF</sequence>
<dbReference type="EC" id="4.1.1.39" evidence="1"/>
<dbReference type="EMBL" id="L01953">
    <property type="protein sequence ID" value="AAA84606.2"/>
    <property type="molecule type" value="Genomic_DNA"/>
</dbReference>
<dbReference type="SMR" id="P28452"/>
<dbReference type="GO" id="GO:0009507">
    <property type="term" value="C:chloroplast"/>
    <property type="evidence" value="ECO:0007669"/>
    <property type="project" value="UniProtKB-SubCell"/>
</dbReference>
<dbReference type="GO" id="GO:0000287">
    <property type="term" value="F:magnesium ion binding"/>
    <property type="evidence" value="ECO:0007669"/>
    <property type="project" value="InterPro"/>
</dbReference>
<dbReference type="GO" id="GO:0004497">
    <property type="term" value="F:monooxygenase activity"/>
    <property type="evidence" value="ECO:0007669"/>
    <property type="project" value="UniProtKB-KW"/>
</dbReference>
<dbReference type="GO" id="GO:0016984">
    <property type="term" value="F:ribulose-bisphosphate carboxylase activity"/>
    <property type="evidence" value="ECO:0007669"/>
    <property type="project" value="UniProtKB-EC"/>
</dbReference>
<dbReference type="GO" id="GO:0009853">
    <property type="term" value="P:photorespiration"/>
    <property type="evidence" value="ECO:0007669"/>
    <property type="project" value="UniProtKB-KW"/>
</dbReference>
<dbReference type="GO" id="GO:0019253">
    <property type="term" value="P:reductive pentose-phosphate cycle"/>
    <property type="evidence" value="ECO:0007669"/>
    <property type="project" value="UniProtKB-KW"/>
</dbReference>
<dbReference type="CDD" id="cd08212">
    <property type="entry name" value="RuBisCO_large_I"/>
    <property type="match status" value="1"/>
</dbReference>
<dbReference type="FunFam" id="3.20.20.110:FF:000001">
    <property type="entry name" value="Ribulose bisphosphate carboxylase large chain"/>
    <property type="match status" value="1"/>
</dbReference>
<dbReference type="FunFam" id="3.30.70.150:FF:000001">
    <property type="entry name" value="Ribulose bisphosphate carboxylase large chain"/>
    <property type="match status" value="1"/>
</dbReference>
<dbReference type="Gene3D" id="3.20.20.110">
    <property type="entry name" value="Ribulose bisphosphate carboxylase, large subunit, C-terminal domain"/>
    <property type="match status" value="1"/>
</dbReference>
<dbReference type="Gene3D" id="3.30.70.150">
    <property type="entry name" value="RuBisCO large subunit, N-terminal domain"/>
    <property type="match status" value="1"/>
</dbReference>
<dbReference type="HAMAP" id="MF_01338">
    <property type="entry name" value="RuBisCO_L_type1"/>
    <property type="match status" value="1"/>
</dbReference>
<dbReference type="InterPro" id="IPR033966">
    <property type="entry name" value="RuBisCO"/>
</dbReference>
<dbReference type="InterPro" id="IPR020878">
    <property type="entry name" value="RuBisCo_large_chain_AS"/>
</dbReference>
<dbReference type="InterPro" id="IPR000685">
    <property type="entry name" value="RuBisCO_lsu_C"/>
</dbReference>
<dbReference type="InterPro" id="IPR036376">
    <property type="entry name" value="RuBisCO_lsu_C_sf"/>
</dbReference>
<dbReference type="InterPro" id="IPR017443">
    <property type="entry name" value="RuBisCO_lsu_fd_N"/>
</dbReference>
<dbReference type="InterPro" id="IPR036422">
    <property type="entry name" value="RuBisCO_lsu_N_sf"/>
</dbReference>
<dbReference type="InterPro" id="IPR020888">
    <property type="entry name" value="RuBisCO_lsuI"/>
</dbReference>
<dbReference type="NCBIfam" id="NF003252">
    <property type="entry name" value="PRK04208.1"/>
    <property type="match status" value="1"/>
</dbReference>
<dbReference type="PANTHER" id="PTHR42704">
    <property type="entry name" value="RIBULOSE BISPHOSPHATE CARBOXYLASE"/>
    <property type="match status" value="1"/>
</dbReference>
<dbReference type="PANTHER" id="PTHR42704:SF15">
    <property type="entry name" value="RIBULOSE BISPHOSPHATE CARBOXYLASE LARGE CHAIN"/>
    <property type="match status" value="1"/>
</dbReference>
<dbReference type="Pfam" id="PF00016">
    <property type="entry name" value="RuBisCO_large"/>
    <property type="match status" value="1"/>
</dbReference>
<dbReference type="Pfam" id="PF02788">
    <property type="entry name" value="RuBisCO_large_N"/>
    <property type="match status" value="1"/>
</dbReference>
<dbReference type="SFLD" id="SFLDG01052">
    <property type="entry name" value="RuBisCO"/>
    <property type="match status" value="1"/>
</dbReference>
<dbReference type="SFLD" id="SFLDS00014">
    <property type="entry name" value="RuBisCO"/>
    <property type="match status" value="1"/>
</dbReference>
<dbReference type="SFLD" id="SFLDG00301">
    <property type="entry name" value="RuBisCO-like_proteins"/>
    <property type="match status" value="1"/>
</dbReference>
<dbReference type="SUPFAM" id="SSF51649">
    <property type="entry name" value="RuBisCo, C-terminal domain"/>
    <property type="match status" value="1"/>
</dbReference>
<dbReference type="SUPFAM" id="SSF54966">
    <property type="entry name" value="RuBisCO, large subunit, small (N-terminal) domain"/>
    <property type="match status" value="1"/>
</dbReference>
<dbReference type="PROSITE" id="PS00157">
    <property type="entry name" value="RUBISCO_LARGE"/>
    <property type="match status" value="1"/>
</dbReference>
<keyword id="KW-0113">Calvin cycle</keyword>
<keyword id="KW-0120">Carbon dioxide fixation</keyword>
<keyword id="KW-0150">Chloroplast</keyword>
<keyword id="KW-1015">Disulfide bond</keyword>
<keyword id="KW-0456">Lyase</keyword>
<keyword id="KW-0460">Magnesium</keyword>
<keyword id="KW-0479">Metal-binding</keyword>
<keyword id="KW-0488">Methylation</keyword>
<keyword id="KW-0503">Monooxygenase</keyword>
<keyword id="KW-0560">Oxidoreductase</keyword>
<keyword id="KW-0601">Photorespiration</keyword>
<keyword id="KW-0602">Photosynthesis</keyword>
<keyword id="KW-0934">Plastid</keyword>
<evidence type="ECO:0000255" key="1">
    <source>
        <dbReference type="HAMAP-Rule" id="MF_01338"/>
    </source>
</evidence>
<protein>
    <recommendedName>
        <fullName evidence="1">Ribulose bisphosphate carboxylase large chain</fullName>
        <shortName evidence="1">RuBisCO large subunit</shortName>
        <ecNumber evidence="1">4.1.1.39</ecNumber>
    </recommendedName>
</protein>
<reference key="1">
    <citation type="journal article" date="1992" name="Science">
        <title>Carnivorous plants: phylogeny and structural evolution.</title>
        <authorList>
            <person name="Albert V.A."/>
            <person name="Williams S.E."/>
            <person name="Chase M.W."/>
        </authorList>
    </citation>
    <scope>NUCLEOTIDE SEQUENCE [GENOMIC DNA]</scope>
    <source>
        <tissue>Leaf</tissue>
    </source>
</reference>
<comment type="function">
    <text evidence="1">RuBisCO catalyzes two reactions: the carboxylation of D-ribulose 1,5-bisphosphate, the primary event in carbon dioxide fixation, as well as the oxidative fragmentation of the pentose substrate in the photorespiration process. Both reactions occur simultaneously and in competition at the same active site.</text>
</comment>
<comment type="catalytic activity">
    <reaction evidence="1">
        <text>2 (2R)-3-phosphoglycerate + 2 H(+) = D-ribulose 1,5-bisphosphate + CO2 + H2O</text>
        <dbReference type="Rhea" id="RHEA:23124"/>
        <dbReference type="ChEBI" id="CHEBI:15377"/>
        <dbReference type="ChEBI" id="CHEBI:15378"/>
        <dbReference type="ChEBI" id="CHEBI:16526"/>
        <dbReference type="ChEBI" id="CHEBI:57870"/>
        <dbReference type="ChEBI" id="CHEBI:58272"/>
        <dbReference type="EC" id="4.1.1.39"/>
    </reaction>
</comment>
<comment type="catalytic activity">
    <reaction evidence="1">
        <text>D-ribulose 1,5-bisphosphate + O2 = 2-phosphoglycolate + (2R)-3-phosphoglycerate + 2 H(+)</text>
        <dbReference type="Rhea" id="RHEA:36631"/>
        <dbReference type="ChEBI" id="CHEBI:15378"/>
        <dbReference type="ChEBI" id="CHEBI:15379"/>
        <dbReference type="ChEBI" id="CHEBI:57870"/>
        <dbReference type="ChEBI" id="CHEBI:58033"/>
        <dbReference type="ChEBI" id="CHEBI:58272"/>
    </reaction>
</comment>
<comment type="cofactor">
    <cofactor evidence="1">
        <name>Mg(2+)</name>
        <dbReference type="ChEBI" id="CHEBI:18420"/>
    </cofactor>
    <text evidence="1">Binds 1 Mg(2+) ion per subunit.</text>
</comment>
<comment type="subunit">
    <text evidence="1">Heterohexadecamer of 8 large chains and 8 small chains; disulfide-linked. The disulfide link is formed within the large subunit homodimers.</text>
</comment>
<comment type="subcellular location">
    <subcellularLocation>
        <location>Plastid</location>
        <location>Chloroplast</location>
    </subcellularLocation>
</comment>
<comment type="PTM">
    <text evidence="1">The disulfide bond which can form in the large chain dimeric partners within the hexadecamer appears to be associated with oxidative stress and protein turnover.</text>
</comment>
<comment type="miscellaneous">
    <text evidence="1">The basic functional RuBisCO is composed of a large chain homodimer in a 'head-to-tail' conformation. In form I RuBisCO this homodimer is arranged in a barrel-like tetramer with the small subunits forming a tetrameric 'cap' on each end of the 'barrel'.</text>
</comment>
<comment type="similarity">
    <text evidence="1">Belongs to the RuBisCO large chain family. Type I subfamily.</text>
</comment>
<geneLocation type="chloroplast"/>
<accession>P28452</accession>
<name>RBL_MICIN</name>